<evidence type="ECO:0000255" key="1">
    <source>
        <dbReference type="HAMAP-Rule" id="MF_01371"/>
    </source>
</evidence>
<evidence type="ECO:0000305" key="2"/>
<keyword id="KW-0687">Ribonucleoprotein</keyword>
<keyword id="KW-0689">Ribosomal protein</keyword>
<gene>
    <name evidence="1" type="primary">rpmD</name>
    <name type="ordered locus">Achl_2670</name>
</gene>
<name>RL30_PSECP</name>
<comment type="subunit">
    <text evidence="1">Part of the 50S ribosomal subunit.</text>
</comment>
<comment type="similarity">
    <text evidence="1">Belongs to the universal ribosomal protein uL30 family.</text>
</comment>
<reference key="1">
    <citation type="submission" date="2009-01" db="EMBL/GenBank/DDBJ databases">
        <title>Complete sequence of chromosome of Arthrobacter chlorophenolicus A6.</title>
        <authorList>
            <consortium name="US DOE Joint Genome Institute"/>
            <person name="Lucas S."/>
            <person name="Copeland A."/>
            <person name="Lapidus A."/>
            <person name="Glavina del Rio T."/>
            <person name="Tice H."/>
            <person name="Bruce D."/>
            <person name="Goodwin L."/>
            <person name="Pitluck S."/>
            <person name="Goltsman E."/>
            <person name="Clum A."/>
            <person name="Larimer F."/>
            <person name="Land M."/>
            <person name="Hauser L."/>
            <person name="Kyrpides N."/>
            <person name="Mikhailova N."/>
            <person name="Jansson J."/>
            <person name="Richardson P."/>
        </authorList>
    </citation>
    <scope>NUCLEOTIDE SEQUENCE [LARGE SCALE GENOMIC DNA]</scope>
    <source>
        <strain>ATCC 700700 / DSM 12829 / CIP 107037 / JCM 12360 / KCTC 9906 / NCIMB 13794 / A6</strain>
    </source>
</reference>
<accession>B8HCY9</accession>
<protein>
    <recommendedName>
        <fullName evidence="1">Large ribosomal subunit protein uL30</fullName>
    </recommendedName>
    <alternativeName>
        <fullName evidence="2">50S ribosomal protein L30</fullName>
    </alternativeName>
</protein>
<organism>
    <name type="scientific">Pseudarthrobacter chlorophenolicus (strain ATCC 700700 / DSM 12829 / CIP 107037 / JCM 12360 / KCTC 9906 / NCIMB 13794 / A6)</name>
    <name type="common">Arthrobacter chlorophenolicus</name>
    <dbReference type="NCBI Taxonomy" id="452863"/>
    <lineage>
        <taxon>Bacteria</taxon>
        <taxon>Bacillati</taxon>
        <taxon>Actinomycetota</taxon>
        <taxon>Actinomycetes</taxon>
        <taxon>Micrococcales</taxon>
        <taxon>Micrococcaceae</taxon>
        <taxon>Pseudarthrobacter</taxon>
    </lineage>
</organism>
<feature type="chain" id="PRO_1000184121" description="Large ribosomal subunit protein uL30">
    <location>
        <begin position="1"/>
        <end position="68"/>
    </location>
</feature>
<proteinExistence type="inferred from homology"/>
<dbReference type="EMBL" id="CP001341">
    <property type="protein sequence ID" value="ACL40635.1"/>
    <property type="molecule type" value="Genomic_DNA"/>
</dbReference>
<dbReference type="RefSeq" id="WP_015937839.1">
    <property type="nucleotide sequence ID" value="NC_011886.1"/>
</dbReference>
<dbReference type="SMR" id="B8HCY9"/>
<dbReference type="STRING" id="452863.Achl_2670"/>
<dbReference type="KEGG" id="ach:Achl_2670"/>
<dbReference type="eggNOG" id="COG1841">
    <property type="taxonomic scope" value="Bacteria"/>
</dbReference>
<dbReference type="HOGENOM" id="CLU_131047_2_0_11"/>
<dbReference type="OrthoDB" id="9812790at2"/>
<dbReference type="Proteomes" id="UP000002505">
    <property type="component" value="Chromosome"/>
</dbReference>
<dbReference type="GO" id="GO:0022625">
    <property type="term" value="C:cytosolic large ribosomal subunit"/>
    <property type="evidence" value="ECO:0007669"/>
    <property type="project" value="TreeGrafter"/>
</dbReference>
<dbReference type="GO" id="GO:0003735">
    <property type="term" value="F:structural constituent of ribosome"/>
    <property type="evidence" value="ECO:0007669"/>
    <property type="project" value="InterPro"/>
</dbReference>
<dbReference type="GO" id="GO:0006412">
    <property type="term" value="P:translation"/>
    <property type="evidence" value="ECO:0007669"/>
    <property type="project" value="UniProtKB-UniRule"/>
</dbReference>
<dbReference type="CDD" id="cd01658">
    <property type="entry name" value="Ribosomal_L30"/>
    <property type="match status" value="1"/>
</dbReference>
<dbReference type="Gene3D" id="3.30.1390.20">
    <property type="entry name" value="Ribosomal protein L30, ferredoxin-like fold domain"/>
    <property type="match status" value="1"/>
</dbReference>
<dbReference type="HAMAP" id="MF_01371_B">
    <property type="entry name" value="Ribosomal_uL30_B"/>
    <property type="match status" value="1"/>
</dbReference>
<dbReference type="InterPro" id="IPR036919">
    <property type="entry name" value="Ribo_uL30_ferredoxin-like_sf"/>
</dbReference>
<dbReference type="InterPro" id="IPR005996">
    <property type="entry name" value="Ribosomal_uL30_bac-type"/>
</dbReference>
<dbReference type="InterPro" id="IPR018038">
    <property type="entry name" value="Ribosomal_uL30_CS"/>
</dbReference>
<dbReference type="InterPro" id="IPR016082">
    <property type="entry name" value="Ribosomal_uL30_ferredoxin-like"/>
</dbReference>
<dbReference type="NCBIfam" id="TIGR01308">
    <property type="entry name" value="rpmD_bact"/>
    <property type="match status" value="1"/>
</dbReference>
<dbReference type="PANTHER" id="PTHR15892:SF2">
    <property type="entry name" value="LARGE RIBOSOMAL SUBUNIT PROTEIN UL30M"/>
    <property type="match status" value="1"/>
</dbReference>
<dbReference type="PANTHER" id="PTHR15892">
    <property type="entry name" value="MITOCHONDRIAL RIBOSOMAL PROTEIN L30"/>
    <property type="match status" value="1"/>
</dbReference>
<dbReference type="Pfam" id="PF00327">
    <property type="entry name" value="Ribosomal_L30"/>
    <property type="match status" value="1"/>
</dbReference>
<dbReference type="PIRSF" id="PIRSF002211">
    <property type="entry name" value="Ribosomal_L30_bac-type"/>
    <property type="match status" value="1"/>
</dbReference>
<dbReference type="SUPFAM" id="SSF55129">
    <property type="entry name" value="Ribosomal protein L30p/L7e"/>
    <property type="match status" value="1"/>
</dbReference>
<dbReference type="PROSITE" id="PS00634">
    <property type="entry name" value="RIBOSOMAL_L30"/>
    <property type="match status" value="1"/>
</dbReference>
<sequence>MAKNLVPSDAKLEITQIKGVIGVKQNQRETLRSLGLKRIGHTVVRSADAVTVGMLNTVPHLVNVEEAK</sequence>